<proteinExistence type="inferred from homology"/>
<reference key="1">
    <citation type="submission" date="2008-07" db="EMBL/GenBank/DDBJ databases">
        <title>Complete sequence of Geobacter bemidjiensis BEM.</title>
        <authorList>
            <consortium name="US DOE Joint Genome Institute"/>
            <person name="Lucas S."/>
            <person name="Copeland A."/>
            <person name="Lapidus A."/>
            <person name="Glavina del Rio T."/>
            <person name="Dalin E."/>
            <person name="Tice H."/>
            <person name="Bruce D."/>
            <person name="Goodwin L."/>
            <person name="Pitluck S."/>
            <person name="Kiss H."/>
            <person name="Brettin T."/>
            <person name="Detter J.C."/>
            <person name="Han C."/>
            <person name="Kuske C.R."/>
            <person name="Schmutz J."/>
            <person name="Larimer F."/>
            <person name="Land M."/>
            <person name="Hauser L."/>
            <person name="Kyrpides N."/>
            <person name="Lykidis A."/>
            <person name="Lovley D."/>
            <person name="Richardson P."/>
        </authorList>
    </citation>
    <scope>NUCLEOTIDE SEQUENCE [LARGE SCALE GENOMIC DNA]</scope>
    <source>
        <strain>ATCC BAA-1014 / DSM 16622 / JCM 12645 / Bem</strain>
    </source>
</reference>
<feature type="chain" id="PRO_1000099124" description="GTPase Der">
    <location>
        <begin position="1"/>
        <end position="440"/>
    </location>
</feature>
<feature type="domain" description="EngA-type G 1">
    <location>
        <begin position="3"/>
        <end position="167"/>
    </location>
</feature>
<feature type="domain" description="EngA-type G 2">
    <location>
        <begin position="176"/>
        <end position="351"/>
    </location>
</feature>
<feature type="domain" description="KH-like" evidence="1">
    <location>
        <begin position="352"/>
        <end position="436"/>
    </location>
</feature>
<feature type="binding site" evidence="1">
    <location>
        <begin position="9"/>
        <end position="16"/>
    </location>
    <ligand>
        <name>GTP</name>
        <dbReference type="ChEBI" id="CHEBI:37565"/>
        <label>1</label>
    </ligand>
</feature>
<feature type="binding site" evidence="1">
    <location>
        <begin position="56"/>
        <end position="60"/>
    </location>
    <ligand>
        <name>GTP</name>
        <dbReference type="ChEBI" id="CHEBI:37565"/>
        <label>1</label>
    </ligand>
</feature>
<feature type="binding site" evidence="1">
    <location>
        <begin position="119"/>
        <end position="122"/>
    </location>
    <ligand>
        <name>GTP</name>
        <dbReference type="ChEBI" id="CHEBI:37565"/>
        <label>1</label>
    </ligand>
</feature>
<feature type="binding site" evidence="1">
    <location>
        <begin position="182"/>
        <end position="189"/>
    </location>
    <ligand>
        <name>GTP</name>
        <dbReference type="ChEBI" id="CHEBI:37565"/>
        <label>2</label>
    </ligand>
</feature>
<feature type="binding site" evidence="1">
    <location>
        <begin position="229"/>
        <end position="233"/>
    </location>
    <ligand>
        <name>GTP</name>
        <dbReference type="ChEBI" id="CHEBI:37565"/>
        <label>2</label>
    </ligand>
</feature>
<feature type="binding site" evidence="1">
    <location>
        <begin position="294"/>
        <end position="297"/>
    </location>
    <ligand>
        <name>GTP</name>
        <dbReference type="ChEBI" id="CHEBI:37565"/>
        <label>2</label>
    </ligand>
</feature>
<protein>
    <recommendedName>
        <fullName evidence="1">GTPase Der</fullName>
    </recommendedName>
    <alternativeName>
        <fullName evidence="1">GTP-binding protein EngA</fullName>
    </alternativeName>
</protein>
<accession>B5EE25</accession>
<sequence length="440" mass="49684">MKPIIAIVGRPNVGKSTLFNRLVGRRKAMVDDMPGVTRDRNYAEVNRFDVPFILVDTGGFEPETSDRLLQQMREQSRFAMDEADLILFIMDARGGLTPADRDVVDMLRRINKPVFYIINKVDGEKQEAEAGDFYSLGVDHIHTISAEHNRGVGDLMDEVLAAIPYDREKELDEEITRIAVVGRPNVGKSTLVNRLLGYERVVANPTAGTTRDAVDTRFTVNKKPYLLIDTAGIRRKGKTVQKVEKYSVMDALRSIERADVVLIVLNAEEGVTEQDSKIAGYAYEAGRGCIFVVNKWDTLAKDNSSIAKFTEEIRRNFKYLPFAPILFVSAETGQRTGKIIAEVDQVMEQYCKRVTTGELNRVFTQAVDENHAPLSAGRRVKFYFATQVAVKPPSFVVFTNCPEGIHFSYERYIMNRFREAFGFNGTPLKLIFRGRDKKDA</sequence>
<evidence type="ECO:0000255" key="1">
    <source>
        <dbReference type="HAMAP-Rule" id="MF_00195"/>
    </source>
</evidence>
<dbReference type="EMBL" id="CP001124">
    <property type="protein sequence ID" value="ACH37763.1"/>
    <property type="molecule type" value="Genomic_DNA"/>
</dbReference>
<dbReference type="RefSeq" id="WP_012529170.1">
    <property type="nucleotide sequence ID" value="NC_011146.1"/>
</dbReference>
<dbReference type="SMR" id="B5EE25"/>
<dbReference type="STRING" id="404380.Gbem_0737"/>
<dbReference type="KEGG" id="gbm:Gbem_0737"/>
<dbReference type="eggNOG" id="COG1160">
    <property type="taxonomic scope" value="Bacteria"/>
</dbReference>
<dbReference type="HOGENOM" id="CLU_016077_6_2_7"/>
<dbReference type="OrthoDB" id="9805918at2"/>
<dbReference type="Proteomes" id="UP000008825">
    <property type="component" value="Chromosome"/>
</dbReference>
<dbReference type="GO" id="GO:0005525">
    <property type="term" value="F:GTP binding"/>
    <property type="evidence" value="ECO:0007669"/>
    <property type="project" value="UniProtKB-UniRule"/>
</dbReference>
<dbReference type="GO" id="GO:0043022">
    <property type="term" value="F:ribosome binding"/>
    <property type="evidence" value="ECO:0007669"/>
    <property type="project" value="TreeGrafter"/>
</dbReference>
<dbReference type="GO" id="GO:0042254">
    <property type="term" value="P:ribosome biogenesis"/>
    <property type="evidence" value="ECO:0007669"/>
    <property type="project" value="UniProtKB-KW"/>
</dbReference>
<dbReference type="CDD" id="cd01894">
    <property type="entry name" value="EngA1"/>
    <property type="match status" value="1"/>
</dbReference>
<dbReference type="CDD" id="cd01895">
    <property type="entry name" value="EngA2"/>
    <property type="match status" value="1"/>
</dbReference>
<dbReference type="FunFam" id="3.30.300.20:FF:000004">
    <property type="entry name" value="GTPase Der"/>
    <property type="match status" value="1"/>
</dbReference>
<dbReference type="FunFam" id="3.40.50.300:FF:000040">
    <property type="entry name" value="GTPase Der"/>
    <property type="match status" value="1"/>
</dbReference>
<dbReference type="FunFam" id="3.40.50.300:FF:000057">
    <property type="entry name" value="GTPase Der"/>
    <property type="match status" value="1"/>
</dbReference>
<dbReference type="Gene3D" id="3.30.300.20">
    <property type="match status" value="1"/>
</dbReference>
<dbReference type="Gene3D" id="3.40.50.300">
    <property type="entry name" value="P-loop containing nucleotide triphosphate hydrolases"/>
    <property type="match status" value="2"/>
</dbReference>
<dbReference type="HAMAP" id="MF_00195">
    <property type="entry name" value="GTPase_Der"/>
    <property type="match status" value="1"/>
</dbReference>
<dbReference type="InterPro" id="IPR031166">
    <property type="entry name" value="G_ENGA"/>
</dbReference>
<dbReference type="InterPro" id="IPR006073">
    <property type="entry name" value="GTP-bd"/>
</dbReference>
<dbReference type="InterPro" id="IPR016484">
    <property type="entry name" value="GTPase_Der"/>
</dbReference>
<dbReference type="InterPro" id="IPR032859">
    <property type="entry name" value="KH_dom-like"/>
</dbReference>
<dbReference type="InterPro" id="IPR015946">
    <property type="entry name" value="KH_dom-like_a/b"/>
</dbReference>
<dbReference type="InterPro" id="IPR027417">
    <property type="entry name" value="P-loop_NTPase"/>
</dbReference>
<dbReference type="InterPro" id="IPR005225">
    <property type="entry name" value="Small_GTP-bd"/>
</dbReference>
<dbReference type="NCBIfam" id="TIGR03594">
    <property type="entry name" value="GTPase_EngA"/>
    <property type="match status" value="1"/>
</dbReference>
<dbReference type="NCBIfam" id="TIGR00231">
    <property type="entry name" value="small_GTP"/>
    <property type="match status" value="2"/>
</dbReference>
<dbReference type="PANTHER" id="PTHR43834">
    <property type="entry name" value="GTPASE DER"/>
    <property type="match status" value="1"/>
</dbReference>
<dbReference type="PANTHER" id="PTHR43834:SF6">
    <property type="entry name" value="GTPASE DER"/>
    <property type="match status" value="1"/>
</dbReference>
<dbReference type="Pfam" id="PF14714">
    <property type="entry name" value="KH_dom-like"/>
    <property type="match status" value="1"/>
</dbReference>
<dbReference type="Pfam" id="PF01926">
    <property type="entry name" value="MMR_HSR1"/>
    <property type="match status" value="2"/>
</dbReference>
<dbReference type="PIRSF" id="PIRSF006485">
    <property type="entry name" value="GTP-binding_EngA"/>
    <property type="match status" value="1"/>
</dbReference>
<dbReference type="PRINTS" id="PR00326">
    <property type="entry name" value="GTP1OBG"/>
</dbReference>
<dbReference type="SUPFAM" id="SSF52540">
    <property type="entry name" value="P-loop containing nucleoside triphosphate hydrolases"/>
    <property type="match status" value="2"/>
</dbReference>
<dbReference type="PROSITE" id="PS51712">
    <property type="entry name" value="G_ENGA"/>
    <property type="match status" value="2"/>
</dbReference>
<organism>
    <name type="scientific">Citrifermentans bemidjiense (strain ATCC BAA-1014 / DSM 16622 / JCM 12645 / Bem)</name>
    <name type="common">Geobacter bemidjiensis</name>
    <dbReference type="NCBI Taxonomy" id="404380"/>
    <lineage>
        <taxon>Bacteria</taxon>
        <taxon>Pseudomonadati</taxon>
        <taxon>Thermodesulfobacteriota</taxon>
        <taxon>Desulfuromonadia</taxon>
        <taxon>Geobacterales</taxon>
        <taxon>Geobacteraceae</taxon>
        <taxon>Citrifermentans</taxon>
    </lineage>
</organism>
<gene>
    <name evidence="1" type="primary">der</name>
    <name type="synonym">engA</name>
    <name type="ordered locus">Gbem_0737</name>
</gene>
<keyword id="KW-0342">GTP-binding</keyword>
<keyword id="KW-0547">Nucleotide-binding</keyword>
<keyword id="KW-1185">Reference proteome</keyword>
<keyword id="KW-0677">Repeat</keyword>
<keyword id="KW-0690">Ribosome biogenesis</keyword>
<name>DER_CITBB</name>
<comment type="function">
    <text evidence="1">GTPase that plays an essential role in the late steps of ribosome biogenesis.</text>
</comment>
<comment type="subunit">
    <text evidence="1">Associates with the 50S ribosomal subunit.</text>
</comment>
<comment type="similarity">
    <text evidence="1">Belongs to the TRAFAC class TrmE-Era-EngA-EngB-Septin-like GTPase superfamily. EngA (Der) GTPase family.</text>
</comment>